<accession>A0RL95</accession>
<proteinExistence type="inferred from homology"/>
<evidence type="ECO:0000255" key="1">
    <source>
        <dbReference type="HAMAP-Rule" id="MF_01347"/>
    </source>
</evidence>
<feature type="chain" id="PRO_1000055095" description="ATP synthase subunit beta">
    <location>
        <begin position="1"/>
        <end position="469"/>
    </location>
</feature>
<feature type="binding site" evidence="1">
    <location>
        <begin position="156"/>
        <end position="163"/>
    </location>
    <ligand>
        <name>ATP</name>
        <dbReference type="ChEBI" id="CHEBI:30616"/>
    </ligand>
</feature>
<name>ATPB_BACAH</name>
<keyword id="KW-0066">ATP synthesis</keyword>
<keyword id="KW-0067">ATP-binding</keyword>
<keyword id="KW-1003">Cell membrane</keyword>
<keyword id="KW-0139">CF(1)</keyword>
<keyword id="KW-0375">Hydrogen ion transport</keyword>
<keyword id="KW-0406">Ion transport</keyword>
<keyword id="KW-0472">Membrane</keyword>
<keyword id="KW-0547">Nucleotide-binding</keyword>
<keyword id="KW-1278">Translocase</keyword>
<keyword id="KW-0813">Transport</keyword>
<gene>
    <name evidence="1" type="primary">atpD</name>
    <name type="ordered locus">BALH_4808</name>
</gene>
<reference key="1">
    <citation type="journal article" date="2007" name="J. Bacteriol.">
        <title>The complete genome sequence of Bacillus thuringiensis Al Hakam.</title>
        <authorList>
            <person name="Challacombe J.F."/>
            <person name="Altherr M.R."/>
            <person name="Xie G."/>
            <person name="Bhotika S.S."/>
            <person name="Brown N."/>
            <person name="Bruce D."/>
            <person name="Campbell C.S."/>
            <person name="Campbell M.L."/>
            <person name="Chen J."/>
            <person name="Chertkov O."/>
            <person name="Cleland C."/>
            <person name="Dimitrijevic M."/>
            <person name="Doggett N.A."/>
            <person name="Fawcett J.J."/>
            <person name="Glavina T."/>
            <person name="Goodwin L.A."/>
            <person name="Green L.D."/>
            <person name="Han C.S."/>
            <person name="Hill K.K."/>
            <person name="Hitchcock P."/>
            <person name="Jackson P.J."/>
            <person name="Keim P."/>
            <person name="Kewalramani A.R."/>
            <person name="Longmire J."/>
            <person name="Lucas S."/>
            <person name="Malfatti S."/>
            <person name="Martinez D."/>
            <person name="McMurry K."/>
            <person name="Meincke L.J."/>
            <person name="Misra M."/>
            <person name="Moseman B.L."/>
            <person name="Mundt M."/>
            <person name="Munk A.C."/>
            <person name="Okinaka R.T."/>
            <person name="Parson-Quintana B."/>
            <person name="Reilly L.P."/>
            <person name="Richardson P."/>
            <person name="Robinson D.L."/>
            <person name="Saunders E."/>
            <person name="Tapia R."/>
            <person name="Tesmer J.G."/>
            <person name="Thayer N."/>
            <person name="Thompson L.S."/>
            <person name="Tice H."/>
            <person name="Ticknor L.O."/>
            <person name="Wills P.L."/>
            <person name="Gilna P."/>
            <person name="Brettin T.S."/>
        </authorList>
    </citation>
    <scope>NUCLEOTIDE SEQUENCE [LARGE SCALE GENOMIC DNA]</scope>
    <source>
        <strain>Al Hakam</strain>
    </source>
</reference>
<organism>
    <name type="scientific">Bacillus thuringiensis (strain Al Hakam)</name>
    <dbReference type="NCBI Taxonomy" id="412694"/>
    <lineage>
        <taxon>Bacteria</taxon>
        <taxon>Bacillati</taxon>
        <taxon>Bacillota</taxon>
        <taxon>Bacilli</taxon>
        <taxon>Bacillales</taxon>
        <taxon>Bacillaceae</taxon>
        <taxon>Bacillus</taxon>
        <taxon>Bacillus cereus group</taxon>
    </lineage>
</organism>
<dbReference type="EC" id="7.1.2.2" evidence="1"/>
<dbReference type="EMBL" id="CP000485">
    <property type="protein sequence ID" value="ABK87988.1"/>
    <property type="molecule type" value="Genomic_DNA"/>
</dbReference>
<dbReference type="RefSeq" id="WP_001032600.1">
    <property type="nucleotide sequence ID" value="NC_008600.1"/>
</dbReference>
<dbReference type="SMR" id="A0RL95"/>
<dbReference type="GeneID" id="45025135"/>
<dbReference type="KEGG" id="btl:BALH_4808"/>
<dbReference type="HOGENOM" id="CLU_022398_0_2_9"/>
<dbReference type="GO" id="GO:0005886">
    <property type="term" value="C:plasma membrane"/>
    <property type="evidence" value="ECO:0007669"/>
    <property type="project" value="UniProtKB-SubCell"/>
</dbReference>
<dbReference type="GO" id="GO:0045259">
    <property type="term" value="C:proton-transporting ATP synthase complex"/>
    <property type="evidence" value="ECO:0007669"/>
    <property type="project" value="UniProtKB-KW"/>
</dbReference>
<dbReference type="GO" id="GO:0005524">
    <property type="term" value="F:ATP binding"/>
    <property type="evidence" value="ECO:0007669"/>
    <property type="project" value="UniProtKB-UniRule"/>
</dbReference>
<dbReference type="GO" id="GO:0016887">
    <property type="term" value="F:ATP hydrolysis activity"/>
    <property type="evidence" value="ECO:0007669"/>
    <property type="project" value="InterPro"/>
</dbReference>
<dbReference type="GO" id="GO:0046933">
    <property type="term" value="F:proton-transporting ATP synthase activity, rotational mechanism"/>
    <property type="evidence" value="ECO:0007669"/>
    <property type="project" value="UniProtKB-UniRule"/>
</dbReference>
<dbReference type="CDD" id="cd18110">
    <property type="entry name" value="ATP-synt_F1_beta_C"/>
    <property type="match status" value="1"/>
</dbReference>
<dbReference type="CDD" id="cd18115">
    <property type="entry name" value="ATP-synt_F1_beta_N"/>
    <property type="match status" value="1"/>
</dbReference>
<dbReference type="CDD" id="cd01133">
    <property type="entry name" value="F1-ATPase_beta_CD"/>
    <property type="match status" value="1"/>
</dbReference>
<dbReference type="FunFam" id="1.10.1140.10:FF:000001">
    <property type="entry name" value="ATP synthase subunit beta"/>
    <property type="match status" value="1"/>
</dbReference>
<dbReference type="FunFam" id="2.40.10.170:FF:000005">
    <property type="entry name" value="ATP synthase subunit beta"/>
    <property type="match status" value="1"/>
</dbReference>
<dbReference type="FunFam" id="3.40.50.300:FF:000004">
    <property type="entry name" value="ATP synthase subunit beta"/>
    <property type="match status" value="1"/>
</dbReference>
<dbReference type="Gene3D" id="2.40.10.170">
    <property type="match status" value="1"/>
</dbReference>
<dbReference type="Gene3D" id="1.10.1140.10">
    <property type="entry name" value="Bovine Mitochondrial F1-atpase, Atp Synthase Beta Chain, Chain D, domain 3"/>
    <property type="match status" value="1"/>
</dbReference>
<dbReference type="Gene3D" id="3.40.50.300">
    <property type="entry name" value="P-loop containing nucleotide triphosphate hydrolases"/>
    <property type="match status" value="1"/>
</dbReference>
<dbReference type="HAMAP" id="MF_01347">
    <property type="entry name" value="ATP_synth_beta_bact"/>
    <property type="match status" value="1"/>
</dbReference>
<dbReference type="InterPro" id="IPR003593">
    <property type="entry name" value="AAA+_ATPase"/>
</dbReference>
<dbReference type="InterPro" id="IPR055190">
    <property type="entry name" value="ATP-synt_VA_C"/>
</dbReference>
<dbReference type="InterPro" id="IPR005722">
    <property type="entry name" value="ATP_synth_F1_bsu"/>
</dbReference>
<dbReference type="InterPro" id="IPR020003">
    <property type="entry name" value="ATPase_a/bsu_AS"/>
</dbReference>
<dbReference type="InterPro" id="IPR050053">
    <property type="entry name" value="ATPase_alpha/beta_chains"/>
</dbReference>
<dbReference type="InterPro" id="IPR004100">
    <property type="entry name" value="ATPase_F1/V1/A1_a/bsu_N"/>
</dbReference>
<dbReference type="InterPro" id="IPR036121">
    <property type="entry name" value="ATPase_F1/V1/A1_a/bsu_N_sf"/>
</dbReference>
<dbReference type="InterPro" id="IPR000194">
    <property type="entry name" value="ATPase_F1/V1/A1_a/bsu_nucl-bd"/>
</dbReference>
<dbReference type="InterPro" id="IPR024034">
    <property type="entry name" value="ATPase_F1/V1_b/a_C"/>
</dbReference>
<dbReference type="InterPro" id="IPR027417">
    <property type="entry name" value="P-loop_NTPase"/>
</dbReference>
<dbReference type="NCBIfam" id="TIGR01039">
    <property type="entry name" value="atpD"/>
    <property type="match status" value="1"/>
</dbReference>
<dbReference type="PANTHER" id="PTHR15184">
    <property type="entry name" value="ATP SYNTHASE"/>
    <property type="match status" value="1"/>
</dbReference>
<dbReference type="PANTHER" id="PTHR15184:SF71">
    <property type="entry name" value="ATP SYNTHASE SUBUNIT BETA, MITOCHONDRIAL"/>
    <property type="match status" value="1"/>
</dbReference>
<dbReference type="Pfam" id="PF00006">
    <property type="entry name" value="ATP-synt_ab"/>
    <property type="match status" value="1"/>
</dbReference>
<dbReference type="Pfam" id="PF02874">
    <property type="entry name" value="ATP-synt_ab_N"/>
    <property type="match status" value="1"/>
</dbReference>
<dbReference type="Pfam" id="PF22919">
    <property type="entry name" value="ATP-synt_VA_C"/>
    <property type="match status" value="1"/>
</dbReference>
<dbReference type="SMART" id="SM00382">
    <property type="entry name" value="AAA"/>
    <property type="match status" value="1"/>
</dbReference>
<dbReference type="SUPFAM" id="SSF47917">
    <property type="entry name" value="C-terminal domain of alpha and beta subunits of F1 ATP synthase"/>
    <property type="match status" value="1"/>
</dbReference>
<dbReference type="SUPFAM" id="SSF50615">
    <property type="entry name" value="N-terminal domain of alpha and beta subunits of F1 ATP synthase"/>
    <property type="match status" value="1"/>
</dbReference>
<dbReference type="SUPFAM" id="SSF52540">
    <property type="entry name" value="P-loop containing nucleoside triphosphate hydrolases"/>
    <property type="match status" value="1"/>
</dbReference>
<dbReference type="PROSITE" id="PS00152">
    <property type="entry name" value="ATPASE_ALPHA_BETA"/>
    <property type="match status" value="1"/>
</dbReference>
<sequence>MNKGRVTQIMGPVVDVKFDGGKLPEIYNALTVKQSNENGTSINLTFEVALHLGDDTVRTVAMSSTDGLVRGTEVEDTGKAISVPVGDATLGRVFNVLGDAIDLDGEVPADVRRDPIHRQAPAFEELSTKVEILETGIKVVDLLAPYIKGGKIGLFGGAGVGKTVLIQELINNIAQEHGGISVFAGVGERTREGNDLYHEMSDSGVIKKTAMVFGQMNEPPGARQRVALTGLTMAEHFRDEQGQDVLLFIDNIFRFTQAGSEVSALLGRMPSAVGYQPTLATEMGQLQERITSTNKGSITSIQAVYVPADDYTDPAPATTFAHLDATTNLERRLTQMGIYPAVDPLASTSRALSPEIVGEEHYEVARQVQQTLQRYKELQDIIAILGMDELSEEDKLVVHRARRIQFFLSQNFHVAEQFTGQKGSYVPVKETVRGFKEILEGKYDDLPEDAFRLVGGIEEVIENAKKMMA</sequence>
<comment type="function">
    <text evidence="1">Produces ATP from ADP in the presence of a proton gradient across the membrane. The catalytic sites are hosted primarily by the beta subunits.</text>
</comment>
<comment type="catalytic activity">
    <reaction evidence="1">
        <text>ATP + H2O + 4 H(+)(in) = ADP + phosphate + 5 H(+)(out)</text>
        <dbReference type="Rhea" id="RHEA:57720"/>
        <dbReference type="ChEBI" id="CHEBI:15377"/>
        <dbReference type="ChEBI" id="CHEBI:15378"/>
        <dbReference type="ChEBI" id="CHEBI:30616"/>
        <dbReference type="ChEBI" id="CHEBI:43474"/>
        <dbReference type="ChEBI" id="CHEBI:456216"/>
        <dbReference type="EC" id="7.1.2.2"/>
    </reaction>
</comment>
<comment type="subunit">
    <text evidence="1">F-type ATPases have 2 components, CF(1) - the catalytic core - and CF(0) - the membrane proton channel. CF(1) has five subunits: alpha(3), beta(3), gamma(1), delta(1), epsilon(1). CF(0) has three main subunits: a(1), b(2) and c(9-12). The alpha and beta chains form an alternating ring which encloses part of the gamma chain. CF(1) is attached to CF(0) by a central stalk formed by the gamma and epsilon chains, while a peripheral stalk is formed by the delta and b chains.</text>
</comment>
<comment type="subcellular location">
    <subcellularLocation>
        <location evidence="1">Cell membrane</location>
        <topology evidence="1">Peripheral membrane protein</topology>
    </subcellularLocation>
</comment>
<comment type="similarity">
    <text evidence="1">Belongs to the ATPase alpha/beta chains family.</text>
</comment>
<protein>
    <recommendedName>
        <fullName evidence="1">ATP synthase subunit beta</fullName>
        <ecNumber evidence="1">7.1.2.2</ecNumber>
    </recommendedName>
    <alternativeName>
        <fullName evidence="1">ATP synthase F1 sector subunit beta</fullName>
    </alternativeName>
    <alternativeName>
        <fullName evidence="1">F-ATPase subunit beta</fullName>
    </alternativeName>
</protein>